<protein>
    <recommendedName>
        <fullName evidence="1">Hut operon positive regulatory protein</fullName>
    </recommendedName>
</protein>
<evidence type="ECO:0000255" key="1">
    <source>
        <dbReference type="HAMAP-Rule" id="MF_00779"/>
    </source>
</evidence>
<reference key="1">
    <citation type="submission" date="2008-10" db="EMBL/GenBank/DDBJ databases">
        <title>Genome sequence of Bacillus cereus B4264.</title>
        <authorList>
            <person name="Dodson R.J."/>
            <person name="Durkin A.S."/>
            <person name="Rosovitz M.J."/>
            <person name="Rasko D.A."/>
            <person name="Hoffmaster A."/>
            <person name="Ravel J."/>
            <person name="Sutton G."/>
        </authorList>
    </citation>
    <scope>NUCLEOTIDE SEQUENCE [LARGE SCALE GENOMIC DNA]</scope>
    <source>
        <strain>B4264</strain>
    </source>
</reference>
<dbReference type="EMBL" id="CP001176">
    <property type="protein sequence ID" value="ACK61935.1"/>
    <property type="molecule type" value="Genomic_DNA"/>
</dbReference>
<dbReference type="RefSeq" id="WP_000926516.1">
    <property type="nucleotide sequence ID" value="NZ_VEHB01000002.1"/>
</dbReference>
<dbReference type="SMR" id="B7HCD1"/>
<dbReference type="GeneID" id="93007528"/>
<dbReference type="KEGG" id="bcb:BCB4264_A3761"/>
<dbReference type="HOGENOM" id="CLU_148478_0_0_9"/>
<dbReference type="Proteomes" id="UP000007096">
    <property type="component" value="Chromosome"/>
</dbReference>
<dbReference type="GO" id="GO:0003729">
    <property type="term" value="F:mRNA binding"/>
    <property type="evidence" value="ECO:0007669"/>
    <property type="project" value="UniProtKB-UniRule"/>
</dbReference>
<dbReference type="GO" id="GO:0006547">
    <property type="term" value="P:L-histidine metabolic process"/>
    <property type="evidence" value="ECO:0007669"/>
    <property type="project" value="UniProtKB-UniRule"/>
</dbReference>
<dbReference type="GO" id="GO:0010628">
    <property type="term" value="P:positive regulation of gene expression"/>
    <property type="evidence" value="ECO:0007669"/>
    <property type="project" value="UniProtKB-UniRule"/>
</dbReference>
<dbReference type="FunFam" id="3.40.1510.10:FF:000001">
    <property type="entry name" value="Hut operon positive regulatory protein"/>
    <property type="match status" value="1"/>
</dbReference>
<dbReference type="Gene3D" id="3.40.1510.10">
    <property type="entry name" value="Hut operon regulatory protein HutP"/>
    <property type="match status" value="1"/>
</dbReference>
<dbReference type="HAMAP" id="MF_00779">
    <property type="entry name" value="HutP"/>
    <property type="match status" value="1"/>
</dbReference>
<dbReference type="InterPro" id="IPR015111">
    <property type="entry name" value="Regulatory_HutP"/>
</dbReference>
<dbReference type="InterPro" id="IPR023552">
    <property type="entry name" value="Regulatory_HutP_bacillales"/>
</dbReference>
<dbReference type="InterPro" id="IPR036482">
    <property type="entry name" value="Regulatory_HutP_sf"/>
</dbReference>
<dbReference type="NCBIfam" id="NF002838">
    <property type="entry name" value="PRK03065.1"/>
    <property type="match status" value="1"/>
</dbReference>
<dbReference type="Pfam" id="PF09021">
    <property type="entry name" value="HutP"/>
    <property type="match status" value="1"/>
</dbReference>
<dbReference type="SUPFAM" id="SSF111064">
    <property type="entry name" value="Hut operon positive regulatory protein HutP"/>
    <property type="match status" value="1"/>
</dbReference>
<organism>
    <name type="scientific">Bacillus cereus (strain B4264)</name>
    <dbReference type="NCBI Taxonomy" id="405532"/>
    <lineage>
        <taxon>Bacteria</taxon>
        <taxon>Bacillati</taxon>
        <taxon>Bacillota</taxon>
        <taxon>Bacilli</taxon>
        <taxon>Bacillales</taxon>
        <taxon>Bacillaceae</taxon>
        <taxon>Bacillus</taxon>
        <taxon>Bacillus cereus group</taxon>
    </lineage>
</organism>
<proteinExistence type="inferred from homology"/>
<comment type="function">
    <text evidence="1">Antiterminator that binds to cis-acting regulatory sequences on the mRNA in the presence of histidine, thereby suppressing transcription termination and activating the hut operon for histidine utilization.</text>
</comment>
<comment type="subunit">
    <text evidence="1">Homohexamer.</text>
</comment>
<comment type="similarity">
    <text evidence="1">Belongs to the HutP family.</text>
</comment>
<name>HUTP_BACC4</name>
<accession>B7HCD1</accession>
<keyword id="KW-0010">Activator</keyword>
<keyword id="KW-0369">Histidine metabolism</keyword>
<keyword id="KW-0694">RNA-binding</keyword>
<keyword id="KW-0804">Transcription</keyword>
<keyword id="KW-0805">Transcription regulation</keyword>
<sequence>MLLQGTHRIGRMAMLLALADENESPVLSIPKGWKYCTGKVGSMNSQKVVAAMETAAKSNQVIETDVYRETHALYHAIMEALYGVTRGQIQLADVLRTVGLRFAIVRGTPYDGKKEGEWVAVALYGTIGAPVKGSEHEAIGLGINHI</sequence>
<feature type="chain" id="PRO_1000133709" description="Hut operon positive regulatory protein">
    <location>
        <begin position="1"/>
        <end position="146"/>
    </location>
</feature>
<gene>
    <name evidence="1" type="primary">hutP</name>
    <name type="ordered locus">BCB4264_A3761</name>
</gene>